<comment type="function">
    <text evidence="1">Catalyzes the catabolism of the allantoin degradation intermediate (S)-ureidoglycolate, generating urea and glyoxylate. Involved in the utilization of allantoin as nitrogen source.</text>
</comment>
<comment type="catalytic activity">
    <reaction evidence="1">
        <text>(S)-ureidoglycolate = urea + glyoxylate</text>
        <dbReference type="Rhea" id="RHEA:11304"/>
        <dbReference type="ChEBI" id="CHEBI:16199"/>
        <dbReference type="ChEBI" id="CHEBI:36655"/>
        <dbReference type="ChEBI" id="CHEBI:57296"/>
        <dbReference type="EC" id="4.3.2.3"/>
    </reaction>
</comment>
<comment type="cofactor">
    <cofactor evidence="1">
        <name>Ni(2+)</name>
        <dbReference type="ChEBI" id="CHEBI:49786"/>
    </cofactor>
</comment>
<comment type="pathway">
    <text evidence="1">Nitrogen metabolism; (S)-allantoin degradation.</text>
</comment>
<comment type="subunit">
    <text evidence="1">Homodimer.</text>
</comment>
<comment type="similarity">
    <text evidence="1">Belongs to the ureidoglycolate lyase family.</text>
</comment>
<accession>A4VP33</accession>
<evidence type="ECO:0000255" key="1">
    <source>
        <dbReference type="HAMAP-Rule" id="MF_00616"/>
    </source>
</evidence>
<feature type="chain" id="PRO_1000061366" description="Ureidoglycolate lyase">
    <location>
        <begin position="1"/>
        <end position="170"/>
    </location>
</feature>
<gene>
    <name evidence="1" type="primary">allA</name>
    <name type="ordered locus">PST_3096</name>
</gene>
<organism>
    <name type="scientific">Stutzerimonas stutzeri (strain A1501)</name>
    <name type="common">Pseudomonas stutzeri</name>
    <dbReference type="NCBI Taxonomy" id="379731"/>
    <lineage>
        <taxon>Bacteria</taxon>
        <taxon>Pseudomonadati</taxon>
        <taxon>Pseudomonadota</taxon>
        <taxon>Gammaproteobacteria</taxon>
        <taxon>Pseudomonadales</taxon>
        <taxon>Pseudomonadaceae</taxon>
        <taxon>Stutzerimonas</taxon>
    </lineage>
</organism>
<proteinExistence type="inferred from homology"/>
<reference key="1">
    <citation type="journal article" date="2008" name="Proc. Natl. Acad. Sci. U.S.A.">
        <title>Nitrogen fixation island and rhizosphere competence traits in the genome of root-associated Pseudomonas stutzeri A1501.</title>
        <authorList>
            <person name="Yan Y."/>
            <person name="Yang J."/>
            <person name="Dou Y."/>
            <person name="Chen M."/>
            <person name="Ping S."/>
            <person name="Peng J."/>
            <person name="Lu W."/>
            <person name="Zhang W."/>
            <person name="Yao Z."/>
            <person name="Li H."/>
            <person name="Liu W."/>
            <person name="He S."/>
            <person name="Geng L."/>
            <person name="Zhang X."/>
            <person name="Yang F."/>
            <person name="Yu H."/>
            <person name="Zhan Y."/>
            <person name="Li D."/>
            <person name="Lin Z."/>
            <person name="Wang Y."/>
            <person name="Elmerich C."/>
            <person name="Lin M."/>
            <person name="Jin Q."/>
        </authorList>
    </citation>
    <scope>NUCLEOTIDE SEQUENCE [LARGE SCALE GENOMIC DNA]</scope>
    <source>
        <strain>A1501</strain>
    </source>
</reference>
<keyword id="KW-0456">Lyase</keyword>
<keyword id="KW-0659">Purine metabolism</keyword>
<keyword id="KW-1185">Reference proteome</keyword>
<protein>
    <recommendedName>
        <fullName evidence="1">Ureidoglycolate lyase</fullName>
        <ecNumber evidence="1">4.3.2.3</ecNumber>
    </recommendedName>
    <alternativeName>
        <fullName evidence="1">Ureidoglycolatase</fullName>
    </alternativeName>
</protein>
<sequence>MRTLTIEPLTKEAFAPFGDVIETEGSDYFMINNGSTRRYHKLATVETAAPEDQAIISIFAAEALEMPLVIRMLERHPLGSQAFIPLLGHPFLVVVAPLGDAPVPGHVRAFRSNGRQGVNYHRGVWHHPVLTIEKRDEFLVVDRSGSGNNCDEYFFTEDQQLLLDPQQVSR</sequence>
<name>ALLA_STUS1</name>
<dbReference type="EC" id="4.3.2.3" evidence="1"/>
<dbReference type="EMBL" id="CP000304">
    <property type="protein sequence ID" value="ABP80734.1"/>
    <property type="molecule type" value="Genomic_DNA"/>
</dbReference>
<dbReference type="RefSeq" id="WP_011914187.1">
    <property type="nucleotide sequence ID" value="NC_009434.1"/>
</dbReference>
<dbReference type="SMR" id="A4VP33"/>
<dbReference type="GeneID" id="66822481"/>
<dbReference type="KEGG" id="psa:PST_3096"/>
<dbReference type="eggNOG" id="COG3194">
    <property type="taxonomic scope" value="Bacteria"/>
</dbReference>
<dbReference type="HOGENOM" id="CLU_070848_1_0_6"/>
<dbReference type="UniPathway" id="UPA00395"/>
<dbReference type="Proteomes" id="UP000000233">
    <property type="component" value="Chromosome"/>
</dbReference>
<dbReference type="GO" id="GO:0004848">
    <property type="term" value="F:ureidoglycolate hydrolase activity"/>
    <property type="evidence" value="ECO:0007669"/>
    <property type="project" value="InterPro"/>
</dbReference>
<dbReference type="GO" id="GO:0050385">
    <property type="term" value="F:ureidoglycolate lyase activity"/>
    <property type="evidence" value="ECO:0007669"/>
    <property type="project" value="UniProtKB-UniRule"/>
</dbReference>
<dbReference type="GO" id="GO:0000256">
    <property type="term" value="P:allantoin catabolic process"/>
    <property type="evidence" value="ECO:0007669"/>
    <property type="project" value="UniProtKB-UniRule"/>
</dbReference>
<dbReference type="GO" id="GO:0006145">
    <property type="term" value="P:purine nucleobase catabolic process"/>
    <property type="evidence" value="ECO:0007669"/>
    <property type="project" value="UniProtKB-UniRule"/>
</dbReference>
<dbReference type="CDD" id="cd20298">
    <property type="entry name" value="cupin_UAH"/>
    <property type="match status" value="1"/>
</dbReference>
<dbReference type="Gene3D" id="2.60.120.480">
    <property type="entry name" value="Ureidoglycolate hydrolase"/>
    <property type="match status" value="1"/>
</dbReference>
<dbReference type="HAMAP" id="MF_00616">
    <property type="entry name" value="Ureidogly_lyase"/>
    <property type="match status" value="1"/>
</dbReference>
<dbReference type="InterPro" id="IPR011051">
    <property type="entry name" value="RmlC_Cupin_sf"/>
</dbReference>
<dbReference type="InterPro" id="IPR047233">
    <property type="entry name" value="UAH_cupin"/>
</dbReference>
<dbReference type="InterPro" id="IPR007247">
    <property type="entry name" value="Ureidogly_lyase"/>
</dbReference>
<dbReference type="InterPro" id="IPR023525">
    <property type="entry name" value="Ureidogly_lyase_bac"/>
</dbReference>
<dbReference type="InterPro" id="IPR024060">
    <property type="entry name" value="Ureidoglycolate_lyase_dom_sf"/>
</dbReference>
<dbReference type="NCBIfam" id="NF002949">
    <property type="entry name" value="PRK03606.1-2"/>
    <property type="match status" value="1"/>
</dbReference>
<dbReference type="NCBIfam" id="NF009932">
    <property type="entry name" value="PRK13395.1"/>
    <property type="match status" value="1"/>
</dbReference>
<dbReference type="PANTHER" id="PTHR21221">
    <property type="entry name" value="UREIDOGLYCOLATE HYDROLASE"/>
    <property type="match status" value="1"/>
</dbReference>
<dbReference type="PANTHER" id="PTHR21221:SF1">
    <property type="entry name" value="UREIDOGLYCOLATE LYASE"/>
    <property type="match status" value="1"/>
</dbReference>
<dbReference type="Pfam" id="PF04115">
    <property type="entry name" value="Ureidogly_lyase"/>
    <property type="match status" value="1"/>
</dbReference>
<dbReference type="PIRSF" id="PIRSF017306">
    <property type="entry name" value="Ureidogly_hydro"/>
    <property type="match status" value="1"/>
</dbReference>
<dbReference type="SUPFAM" id="SSF51182">
    <property type="entry name" value="RmlC-like cupins"/>
    <property type="match status" value="1"/>
</dbReference>